<feature type="chain" id="PRO_0000267008" description="Enolase">
    <location>
        <begin position="1"/>
        <end position="427"/>
    </location>
</feature>
<feature type="active site" description="Proton donor" evidence="1">
    <location>
        <position position="205"/>
    </location>
</feature>
<feature type="active site" description="Proton acceptor" evidence="1">
    <location>
        <position position="337"/>
    </location>
</feature>
<feature type="binding site" evidence="1">
    <location>
        <position position="163"/>
    </location>
    <ligand>
        <name>(2R)-2-phosphoglycerate</name>
        <dbReference type="ChEBI" id="CHEBI:58289"/>
    </ligand>
</feature>
<feature type="binding site" evidence="1">
    <location>
        <position position="242"/>
    </location>
    <ligand>
        <name>Mg(2+)</name>
        <dbReference type="ChEBI" id="CHEBI:18420"/>
    </ligand>
</feature>
<feature type="binding site" evidence="1">
    <location>
        <position position="285"/>
    </location>
    <ligand>
        <name>Mg(2+)</name>
        <dbReference type="ChEBI" id="CHEBI:18420"/>
    </ligand>
</feature>
<feature type="binding site" evidence="1">
    <location>
        <position position="312"/>
    </location>
    <ligand>
        <name>Mg(2+)</name>
        <dbReference type="ChEBI" id="CHEBI:18420"/>
    </ligand>
</feature>
<feature type="binding site" evidence="1">
    <location>
        <position position="337"/>
    </location>
    <ligand>
        <name>(2R)-2-phosphoglycerate</name>
        <dbReference type="ChEBI" id="CHEBI:58289"/>
    </ligand>
</feature>
<feature type="binding site" evidence="1">
    <location>
        <position position="366"/>
    </location>
    <ligand>
        <name>(2R)-2-phosphoglycerate</name>
        <dbReference type="ChEBI" id="CHEBI:58289"/>
    </ligand>
</feature>
<feature type="binding site" evidence="1">
    <location>
        <position position="367"/>
    </location>
    <ligand>
        <name>(2R)-2-phosphoglycerate</name>
        <dbReference type="ChEBI" id="CHEBI:58289"/>
    </ligand>
</feature>
<feature type="binding site" evidence="1">
    <location>
        <position position="388"/>
    </location>
    <ligand>
        <name>(2R)-2-phosphoglycerate</name>
        <dbReference type="ChEBI" id="CHEBI:58289"/>
    </ligand>
</feature>
<gene>
    <name evidence="1" type="primary">eno</name>
    <name type="ordered locus">BURPS1710b_2711</name>
</gene>
<comment type="function">
    <text evidence="1">Catalyzes the reversible conversion of 2-phosphoglycerate (2-PG) into phosphoenolpyruvate (PEP). It is essential for the degradation of carbohydrates via glycolysis.</text>
</comment>
<comment type="catalytic activity">
    <reaction evidence="1">
        <text>(2R)-2-phosphoglycerate = phosphoenolpyruvate + H2O</text>
        <dbReference type="Rhea" id="RHEA:10164"/>
        <dbReference type="ChEBI" id="CHEBI:15377"/>
        <dbReference type="ChEBI" id="CHEBI:58289"/>
        <dbReference type="ChEBI" id="CHEBI:58702"/>
        <dbReference type="EC" id="4.2.1.11"/>
    </reaction>
</comment>
<comment type="cofactor">
    <cofactor evidence="1">
        <name>Mg(2+)</name>
        <dbReference type="ChEBI" id="CHEBI:18420"/>
    </cofactor>
    <text evidence="1">Binds a second Mg(2+) ion via substrate during catalysis.</text>
</comment>
<comment type="pathway">
    <text evidence="1">Carbohydrate degradation; glycolysis; pyruvate from D-glyceraldehyde 3-phosphate: step 4/5.</text>
</comment>
<comment type="subcellular location">
    <subcellularLocation>
        <location evidence="1">Cytoplasm</location>
    </subcellularLocation>
    <subcellularLocation>
        <location evidence="1">Secreted</location>
    </subcellularLocation>
    <subcellularLocation>
        <location evidence="1">Cell surface</location>
    </subcellularLocation>
    <text evidence="1">Fractions of enolase are present in both the cytoplasm and on the cell surface.</text>
</comment>
<comment type="similarity">
    <text evidence="1">Belongs to the enolase family.</text>
</comment>
<keyword id="KW-0963">Cytoplasm</keyword>
<keyword id="KW-0324">Glycolysis</keyword>
<keyword id="KW-0456">Lyase</keyword>
<keyword id="KW-0460">Magnesium</keyword>
<keyword id="KW-0479">Metal-binding</keyword>
<keyword id="KW-0964">Secreted</keyword>
<proteinExistence type="inferred from homology"/>
<protein>
    <recommendedName>
        <fullName evidence="1">Enolase</fullName>
        <ecNumber evidence="1">4.2.1.11</ecNumber>
    </recommendedName>
    <alternativeName>
        <fullName evidence="1">2-phospho-D-glycerate hydro-lyase</fullName>
    </alternativeName>
    <alternativeName>
        <fullName evidence="1">2-phosphoglycerate dehydratase</fullName>
    </alternativeName>
</protein>
<dbReference type="EC" id="4.2.1.11" evidence="1"/>
<dbReference type="EMBL" id="CP000124">
    <property type="protein sequence ID" value="ABA50375.1"/>
    <property type="molecule type" value="Genomic_DNA"/>
</dbReference>
<dbReference type="RefSeq" id="WP_004192585.1">
    <property type="nucleotide sequence ID" value="NC_007434.1"/>
</dbReference>
<dbReference type="SMR" id="Q3JQQ6"/>
<dbReference type="EnsemblBacteria" id="ABA50375">
    <property type="protein sequence ID" value="ABA50375"/>
    <property type="gene ID" value="BURPS1710b_2711"/>
</dbReference>
<dbReference type="GeneID" id="93060827"/>
<dbReference type="KEGG" id="bpm:BURPS1710b_2711"/>
<dbReference type="HOGENOM" id="CLU_031223_2_1_4"/>
<dbReference type="UniPathway" id="UPA00109">
    <property type="reaction ID" value="UER00187"/>
</dbReference>
<dbReference type="Proteomes" id="UP000002700">
    <property type="component" value="Chromosome I"/>
</dbReference>
<dbReference type="GO" id="GO:0009986">
    <property type="term" value="C:cell surface"/>
    <property type="evidence" value="ECO:0007669"/>
    <property type="project" value="UniProtKB-SubCell"/>
</dbReference>
<dbReference type="GO" id="GO:0005576">
    <property type="term" value="C:extracellular region"/>
    <property type="evidence" value="ECO:0007669"/>
    <property type="project" value="UniProtKB-SubCell"/>
</dbReference>
<dbReference type="GO" id="GO:0000015">
    <property type="term" value="C:phosphopyruvate hydratase complex"/>
    <property type="evidence" value="ECO:0007669"/>
    <property type="project" value="InterPro"/>
</dbReference>
<dbReference type="GO" id="GO:0000287">
    <property type="term" value="F:magnesium ion binding"/>
    <property type="evidence" value="ECO:0007669"/>
    <property type="project" value="UniProtKB-UniRule"/>
</dbReference>
<dbReference type="GO" id="GO:0004634">
    <property type="term" value="F:phosphopyruvate hydratase activity"/>
    <property type="evidence" value="ECO:0007669"/>
    <property type="project" value="UniProtKB-UniRule"/>
</dbReference>
<dbReference type="GO" id="GO:0006096">
    <property type="term" value="P:glycolytic process"/>
    <property type="evidence" value="ECO:0007669"/>
    <property type="project" value="UniProtKB-UniRule"/>
</dbReference>
<dbReference type="CDD" id="cd03313">
    <property type="entry name" value="enolase"/>
    <property type="match status" value="1"/>
</dbReference>
<dbReference type="FunFam" id="3.20.20.120:FF:000001">
    <property type="entry name" value="Enolase"/>
    <property type="match status" value="1"/>
</dbReference>
<dbReference type="FunFam" id="3.30.390.10:FF:000001">
    <property type="entry name" value="Enolase"/>
    <property type="match status" value="1"/>
</dbReference>
<dbReference type="Gene3D" id="3.20.20.120">
    <property type="entry name" value="Enolase-like C-terminal domain"/>
    <property type="match status" value="1"/>
</dbReference>
<dbReference type="Gene3D" id="3.30.390.10">
    <property type="entry name" value="Enolase-like, N-terminal domain"/>
    <property type="match status" value="1"/>
</dbReference>
<dbReference type="HAMAP" id="MF_00318">
    <property type="entry name" value="Enolase"/>
    <property type="match status" value="1"/>
</dbReference>
<dbReference type="InterPro" id="IPR000941">
    <property type="entry name" value="Enolase"/>
</dbReference>
<dbReference type="InterPro" id="IPR036849">
    <property type="entry name" value="Enolase-like_C_sf"/>
</dbReference>
<dbReference type="InterPro" id="IPR029017">
    <property type="entry name" value="Enolase-like_N"/>
</dbReference>
<dbReference type="InterPro" id="IPR020810">
    <property type="entry name" value="Enolase_C"/>
</dbReference>
<dbReference type="InterPro" id="IPR020809">
    <property type="entry name" value="Enolase_CS"/>
</dbReference>
<dbReference type="InterPro" id="IPR020811">
    <property type="entry name" value="Enolase_N"/>
</dbReference>
<dbReference type="NCBIfam" id="TIGR01060">
    <property type="entry name" value="eno"/>
    <property type="match status" value="1"/>
</dbReference>
<dbReference type="PANTHER" id="PTHR11902">
    <property type="entry name" value="ENOLASE"/>
    <property type="match status" value="1"/>
</dbReference>
<dbReference type="PANTHER" id="PTHR11902:SF1">
    <property type="entry name" value="ENOLASE"/>
    <property type="match status" value="1"/>
</dbReference>
<dbReference type="Pfam" id="PF00113">
    <property type="entry name" value="Enolase_C"/>
    <property type="match status" value="1"/>
</dbReference>
<dbReference type="Pfam" id="PF03952">
    <property type="entry name" value="Enolase_N"/>
    <property type="match status" value="1"/>
</dbReference>
<dbReference type="PIRSF" id="PIRSF001400">
    <property type="entry name" value="Enolase"/>
    <property type="match status" value="1"/>
</dbReference>
<dbReference type="PRINTS" id="PR00148">
    <property type="entry name" value="ENOLASE"/>
</dbReference>
<dbReference type="SFLD" id="SFLDF00002">
    <property type="entry name" value="enolase"/>
    <property type="match status" value="1"/>
</dbReference>
<dbReference type="SFLD" id="SFLDG00178">
    <property type="entry name" value="enolase"/>
    <property type="match status" value="1"/>
</dbReference>
<dbReference type="SMART" id="SM01192">
    <property type="entry name" value="Enolase_C"/>
    <property type="match status" value="1"/>
</dbReference>
<dbReference type="SMART" id="SM01193">
    <property type="entry name" value="Enolase_N"/>
    <property type="match status" value="1"/>
</dbReference>
<dbReference type="SUPFAM" id="SSF51604">
    <property type="entry name" value="Enolase C-terminal domain-like"/>
    <property type="match status" value="1"/>
</dbReference>
<dbReference type="SUPFAM" id="SSF54826">
    <property type="entry name" value="Enolase N-terminal domain-like"/>
    <property type="match status" value="1"/>
</dbReference>
<dbReference type="PROSITE" id="PS00164">
    <property type="entry name" value="ENOLASE"/>
    <property type="match status" value="1"/>
</dbReference>
<accession>Q3JQQ6</accession>
<evidence type="ECO:0000255" key="1">
    <source>
        <dbReference type="HAMAP-Rule" id="MF_00318"/>
    </source>
</evidence>
<sequence>MSAIVDIIGREILDSRGNPTVECDVLLESGTMGRAAVPSGASTGSREAIELRDGEAGRYGGKGVLKAVEHINTEISEAIMGLDASEQAFLDKTLLELDGTDNKSRLGANAMLAVSMAVAKAAAEEAGLPLYRYFGGSGAMQLPVPMMNIVNGGAHANNSLDIQEFMIVPVSQPTFREALRCGAEVFHALKKILGDRGMSTAVGDEGGFAPNFGSNDECLSTILQAIEKAGYRAGEDVLLALDCAASEFYHDGKYQLAGEGLQLSSAEFTDYLATLADKFPIVSIEDGMHEGDWDGWKLLTERLGKKVQLVGDDLFVTNTRILKEGIEKGIANSILIKINQIGTLTETFAAIEMAKRARYTAVISHRSGETEDSTIADIAVGLNAGQIKTGSLSRSDRISKYNQLLRIEEDLGDIASYPGKSAFYNLR</sequence>
<name>ENO_BURP1</name>
<reference key="1">
    <citation type="journal article" date="2010" name="Genome Biol. Evol.">
        <title>Continuing evolution of Burkholderia mallei through genome reduction and large-scale rearrangements.</title>
        <authorList>
            <person name="Losada L."/>
            <person name="Ronning C.M."/>
            <person name="DeShazer D."/>
            <person name="Woods D."/>
            <person name="Fedorova N."/>
            <person name="Kim H.S."/>
            <person name="Shabalina S.A."/>
            <person name="Pearson T.R."/>
            <person name="Brinkac L."/>
            <person name="Tan P."/>
            <person name="Nandi T."/>
            <person name="Crabtree J."/>
            <person name="Badger J."/>
            <person name="Beckstrom-Sternberg S."/>
            <person name="Saqib M."/>
            <person name="Schutzer S.E."/>
            <person name="Keim P."/>
            <person name="Nierman W.C."/>
        </authorList>
    </citation>
    <scope>NUCLEOTIDE SEQUENCE [LARGE SCALE GENOMIC DNA]</scope>
    <source>
        <strain>1710b</strain>
    </source>
</reference>
<organism>
    <name type="scientific">Burkholderia pseudomallei (strain 1710b)</name>
    <dbReference type="NCBI Taxonomy" id="320372"/>
    <lineage>
        <taxon>Bacteria</taxon>
        <taxon>Pseudomonadati</taxon>
        <taxon>Pseudomonadota</taxon>
        <taxon>Betaproteobacteria</taxon>
        <taxon>Burkholderiales</taxon>
        <taxon>Burkholderiaceae</taxon>
        <taxon>Burkholderia</taxon>
        <taxon>pseudomallei group</taxon>
    </lineage>
</organism>